<evidence type="ECO:0000255" key="1">
    <source>
        <dbReference type="HAMAP-Rule" id="MF_00026"/>
    </source>
</evidence>
<evidence type="ECO:0000256" key="2">
    <source>
        <dbReference type="SAM" id="MobiDB-lite"/>
    </source>
</evidence>
<comment type="similarity">
    <text evidence="1">Belongs to the PDCD5 family.</text>
</comment>
<dbReference type="EMBL" id="CP000609">
    <property type="protein sequence ID" value="ABO35815.1"/>
    <property type="molecule type" value="Genomic_DNA"/>
</dbReference>
<dbReference type="RefSeq" id="WP_011869263.1">
    <property type="nucleotide sequence ID" value="NC_009135.1"/>
</dbReference>
<dbReference type="SMR" id="A4G031"/>
<dbReference type="STRING" id="402880.MmarC5_1518"/>
<dbReference type="GeneID" id="4928639"/>
<dbReference type="KEGG" id="mmq:MmarC5_1518"/>
<dbReference type="eggNOG" id="arCOG04179">
    <property type="taxonomic scope" value="Archaea"/>
</dbReference>
<dbReference type="HOGENOM" id="CLU_122978_3_0_2"/>
<dbReference type="OrthoDB" id="7912at2157"/>
<dbReference type="Proteomes" id="UP000000253">
    <property type="component" value="Chromosome"/>
</dbReference>
<dbReference type="GO" id="GO:0005829">
    <property type="term" value="C:cytosol"/>
    <property type="evidence" value="ECO:0007669"/>
    <property type="project" value="TreeGrafter"/>
</dbReference>
<dbReference type="GO" id="GO:0003677">
    <property type="term" value="F:DNA binding"/>
    <property type="evidence" value="ECO:0007669"/>
    <property type="project" value="UniProtKB-UniRule"/>
</dbReference>
<dbReference type="Gene3D" id="1.10.8.140">
    <property type="entry name" value="PDCD5-like"/>
    <property type="match status" value="1"/>
</dbReference>
<dbReference type="HAMAP" id="MF_00026">
    <property type="entry name" value="dsDNA_bind"/>
    <property type="match status" value="1"/>
</dbReference>
<dbReference type="InterPro" id="IPR022889">
    <property type="entry name" value="DNA_bind_arc"/>
</dbReference>
<dbReference type="InterPro" id="IPR002836">
    <property type="entry name" value="PDCD5-like"/>
</dbReference>
<dbReference type="InterPro" id="IPR036883">
    <property type="entry name" value="PDCD5-like_sf"/>
</dbReference>
<dbReference type="NCBIfam" id="NF003268">
    <property type="entry name" value="PRK04239.1"/>
    <property type="match status" value="1"/>
</dbReference>
<dbReference type="PANTHER" id="PTHR10840">
    <property type="entry name" value="PROGRAMMED CELL DEATH PROTEIN 5"/>
    <property type="match status" value="1"/>
</dbReference>
<dbReference type="PANTHER" id="PTHR10840:SF0">
    <property type="entry name" value="PROGRAMMED CELL DEATH PROTEIN 5"/>
    <property type="match status" value="1"/>
</dbReference>
<dbReference type="Pfam" id="PF01984">
    <property type="entry name" value="dsDNA_bind"/>
    <property type="match status" value="1"/>
</dbReference>
<dbReference type="PIRSF" id="PIRSF015730">
    <property type="entry name" value="TFAR19"/>
    <property type="match status" value="1"/>
</dbReference>
<dbReference type="SUPFAM" id="SSF46950">
    <property type="entry name" value="Double-stranded DNA-binding domain"/>
    <property type="match status" value="1"/>
</dbReference>
<proteinExistence type="inferred from homology"/>
<keyword id="KW-0238">DNA-binding</keyword>
<gene>
    <name type="ordered locus">MmarC5_1518</name>
</gene>
<organism>
    <name type="scientific">Methanococcus maripaludis (strain C5 / ATCC BAA-1333)</name>
    <dbReference type="NCBI Taxonomy" id="402880"/>
    <lineage>
        <taxon>Archaea</taxon>
        <taxon>Methanobacteriati</taxon>
        <taxon>Methanobacteriota</taxon>
        <taxon>Methanomada group</taxon>
        <taxon>Methanococci</taxon>
        <taxon>Methanococcales</taxon>
        <taxon>Methanococcaceae</taxon>
        <taxon>Methanococcus</taxon>
    </lineage>
</organism>
<reference key="1">
    <citation type="submission" date="2007-03" db="EMBL/GenBank/DDBJ databases">
        <title>Complete sequence of chromosome of Methanococcus maripaludis C5.</title>
        <authorList>
            <consortium name="US DOE Joint Genome Institute"/>
            <person name="Copeland A."/>
            <person name="Lucas S."/>
            <person name="Lapidus A."/>
            <person name="Barry K."/>
            <person name="Glavina del Rio T."/>
            <person name="Dalin E."/>
            <person name="Tice H."/>
            <person name="Pitluck S."/>
            <person name="Chertkov O."/>
            <person name="Brettin T."/>
            <person name="Bruce D."/>
            <person name="Han C."/>
            <person name="Detter J.C."/>
            <person name="Schmutz J."/>
            <person name="Larimer F."/>
            <person name="Land M."/>
            <person name="Hauser L."/>
            <person name="Kyrpides N."/>
            <person name="Mikhailova N."/>
            <person name="Sieprawska-Lupa M."/>
            <person name="Whitman W.B."/>
            <person name="Richardson P."/>
        </authorList>
    </citation>
    <scope>NUCLEOTIDE SEQUENCE [LARGE SCALE GENOMIC DNA]</scope>
    <source>
        <strain>C5 / ATCC BAA-1333</strain>
    </source>
</reference>
<accession>A4G031</accession>
<protein>
    <recommendedName>
        <fullName evidence="1">DNA-binding protein MmarC5_1518</fullName>
    </recommendedName>
</protein>
<feature type="chain" id="PRO_1000002198" description="DNA-binding protein MmarC5_1518">
    <location>
        <begin position="1"/>
        <end position="118"/>
    </location>
</feature>
<feature type="region of interest" description="Disordered" evidence="2">
    <location>
        <begin position="1"/>
        <end position="35"/>
    </location>
</feature>
<feature type="compositionally biased region" description="Basic and acidic residues" evidence="2">
    <location>
        <begin position="1"/>
        <end position="12"/>
    </location>
</feature>
<name>Y1518_METM5</name>
<sequence>MNPEEIRQRRLQEMQAKAQEQGAEDPEAQRQAQEQQMQYEMQKQKILRQILSEDARSRLARIKLAKPQFAEHVEMQLIQLAQAGKLPVPLTDEYFKGLLDRIYEMNRPAKKEITIMRK</sequence>